<evidence type="ECO:0000255" key="1">
    <source>
        <dbReference type="HAMAP-Rule" id="MF_00480"/>
    </source>
</evidence>
<evidence type="ECO:0000305" key="2"/>
<organism>
    <name type="scientific">Synechococcus sp. (strain JA-3-3Ab)</name>
    <name type="common">Cyanobacteria bacterium Yellowstone A-Prime</name>
    <dbReference type="NCBI Taxonomy" id="321327"/>
    <lineage>
        <taxon>Bacteria</taxon>
        <taxon>Bacillati</taxon>
        <taxon>Cyanobacteriota</taxon>
        <taxon>Cyanophyceae</taxon>
        <taxon>Synechococcales</taxon>
        <taxon>Synechococcaceae</taxon>
        <taxon>Synechococcus</taxon>
    </lineage>
</organism>
<name>RS7_SYNJA</name>
<accession>Q2JUX6</accession>
<dbReference type="EMBL" id="CP000239">
    <property type="protein sequence ID" value="ABC99481.1"/>
    <property type="molecule type" value="Genomic_DNA"/>
</dbReference>
<dbReference type="RefSeq" id="WP_011430158.1">
    <property type="nucleotide sequence ID" value="NC_007775.1"/>
</dbReference>
<dbReference type="SMR" id="Q2JUX6"/>
<dbReference type="STRING" id="321327.CYA_1300"/>
<dbReference type="KEGG" id="cya:CYA_1300"/>
<dbReference type="eggNOG" id="COG0049">
    <property type="taxonomic scope" value="Bacteria"/>
</dbReference>
<dbReference type="HOGENOM" id="CLU_072226_1_1_3"/>
<dbReference type="OrthoDB" id="9807653at2"/>
<dbReference type="Proteomes" id="UP000008818">
    <property type="component" value="Chromosome"/>
</dbReference>
<dbReference type="GO" id="GO:0015935">
    <property type="term" value="C:small ribosomal subunit"/>
    <property type="evidence" value="ECO:0007669"/>
    <property type="project" value="InterPro"/>
</dbReference>
<dbReference type="GO" id="GO:0019843">
    <property type="term" value="F:rRNA binding"/>
    <property type="evidence" value="ECO:0007669"/>
    <property type="project" value="UniProtKB-UniRule"/>
</dbReference>
<dbReference type="GO" id="GO:0003735">
    <property type="term" value="F:structural constituent of ribosome"/>
    <property type="evidence" value="ECO:0007669"/>
    <property type="project" value="InterPro"/>
</dbReference>
<dbReference type="GO" id="GO:0000049">
    <property type="term" value="F:tRNA binding"/>
    <property type="evidence" value="ECO:0007669"/>
    <property type="project" value="UniProtKB-UniRule"/>
</dbReference>
<dbReference type="GO" id="GO:0006412">
    <property type="term" value="P:translation"/>
    <property type="evidence" value="ECO:0007669"/>
    <property type="project" value="UniProtKB-UniRule"/>
</dbReference>
<dbReference type="CDD" id="cd14869">
    <property type="entry name" value="uS7_Bacteria"/>
    <property type="match status" value="1"/>
</dbReference>
<dbReference type="FunFam" id="1.10.455.10:FF:000001">
    <property type="entry name" value="30S ribosomal protein S7"/>
    <property type="match status" value="1"/>
</dbReference>
<dbReference type="Gene3D" id="1.10.455.10">
    <property type="entry name" value="Ribosomal protein S7 domain"/>
    <property type="match status" value="1"/>
</dbReference>
<dbReference type="HAMAP" id="MF_00480_B">
    <property type="entry name" value="Ribosomal_uS7_B"/>
    <property type="match status" value="1"/>
</dbReference>
<dbReference type="InterPro" id="IPR000235">
    <property type="entry name" value="Ribosomal_uS7"/>
</dbReference>
<dbReference type="InterPro" id="IPR005717">
    <property type="entry name" value="Ribosomal_uS7_bac/org-type"/>
</dbReference>
<dbReference type="InterPro" id="IPR023798">
    <property type="entry name" value="Ribosomal_uS7_dom"/>
</dbReference>
<dbReference type="InterPro" id="IPR036823">
    <property type="entry name" value="Ribosomal_uS7_dom_sf"/>
</dbReference>
<dbReference type="NCBIfam" id="TIGR01029">
    <property type="entry name" value="rpsG_bact"/>
    <property type="match status" value="1"/>
</dbReference>
<dbReference type="PANTHER" id="PTHR11205">
    <property type="entry name" value="RIBOSOMAL PROTEIN S7"/>
    <property type="match status" value="1"/>
</dbReference>
<dbReference type="Pfam" id="PF00177">
    <property type="entry name" value="Ribosomal_S7"/>
    <property type="match status" value="1"/>
</dbReference>
<dbReference type="PIRSF" id="PIRSF002122">
    <property type="entry name" value="RPS7p_RPS7a_RPS5e_RPS7o"/>
    <property type="match status" value="1"/>
</dbReference>
<dbReference type="SUPFAM" id="SSF47973">
    <property type="entry name" value="Ribosomal protein S7"/>
    <property type="match status" value="1"/>
</dbReference>
<reference key="1">
    <citation type="journal article" date="2007" name="ISME J.">
        <title>Population level functional diversity in a microbial community revealed by comparative genomic and metagenomic analyses.</title>
        <authorList>
            <person name="Bhaya D."/>
            <person name="Grossman A.R."/>
            <person name="Steunou A.-S."/>
            <person name="Khuri N."/>
            <person name="Cohan F.M."/>
            <person name="Hamamura N."/>
            <person name="Melendrez M.C."/>
            <person name="Bateson M.M."/>
            <person name="Ward D.M."/>
            <person name="Heidelberg J.F."/>
        </authorList>
    </citation>
    <scope>NUCLEOTIDE SEQUENCE [LARGE SCALE GENOMIC DNA]</scope>
    <source>
        <strain>JA-3-3Ab</strain>
    </source>
</reference>
<protein>
    <recommendedName>
        <fullName evidence="1">Small ribosomal subunit protein uS7</fullName>
    </recommendedName>
    <alternativeName>
        <fullName evidence="2">30S ribosomal protein S7</fullName>
    </alternativeName>
</protein>
<comment type="function">
    <text evidence="1">One of the primary rRNA binding proteins, it binds directly to 16S rRNA where it nucleates assembly of the head domain of the 30S subunit. Is located at the subunit interface close to the decoding center, probably blocks exit of the E-site tRNA.</text>
</comment>
<comment type="subunit">
    <text evidence="1">Part of the 30S ribosomal subunit. Contacts proteins S9 and S11.</text>
</comment>
<comment type="similarity">
    <text evidence="1">Belongs to the universal ribosomal protein uS7 family.</text>
</comment>
<sequence length="156" mass="17704">MSRRNRAPRRDVPPDPKYGSRLVTMLIHKLMMRGKASLAARILYDALEIVRERTGQDPLPVLENAVRNATPLVEVKARRVGGATYQVPVEVRAERGTSLALRWLVTFSRTRPGRTMSAKLANEIIDAANETGNAIRRREEVHRMAEANKAFAHYRY</sequence>
<feature type="chain" id="PRO_0000241782" description="Small ribosomal subunit protein uS7">
    <location>
        <begin position="1"/>
        <end position="156"/>
    </location>
</feature>
<proteinExistence type="inferred from homology"/>
<keyword id="KW-0687">Ribonucleoprotein</keyword>
<keyword id="KW-0689">Ribosomal protein</keyword>
<keyword id="KW-0694">RNA-binding</keyword>
<keyword id="KW-0699">rRNA-binding</keyword>
<keyword id="KW-0820">tRNA-binding</keyword>
<gene>
    <name evidence="1" type="primary">rpsG</name>
    <name evidence="1" type="synonym">rps7</name>
    <name type="ordered locus">CYA_1300</name>
</gene>